<protein>
    <recommendedName>
        <fullName evidence="2">Voltage-dependent L-type calcium channel subunit alpha-1F</fullName>
    </recommendedName>
    <alternativeName>
        <fullName>Voltage-gated calcium channel subunit alpha Cav1.4</fullName>
    </alternativeName>
</protein>
<proteinExistence type="evidence at protein level"/>
<gene>
    <name evidence="9" type="primary">Cacna1f</name>
</gene>
<comment type="function">
    <text evidence="2">Voltage-sensitive calcium channels (VSCC) mediate the entry of calcium ions into excitable cells and are also involved in a variety of calcium-dependent processes, including muscle contraction, hormone or neurotransmitter release, gene expression, cell motility, cell division and cell death. The isoform alpha-1F gives rise to L-type calcium currents. Long-lasting (L-type) calcium channels belong to the 'high-voltage activated' (HVA) group. They are blocked by dihydropyridines (DHP), phenylalkylamines, and by benzothiazepines (By similarity). Activates at more negative voltages and does not undergo calcium-dependent inactivation (CDI), due to incoming calcium ions, during depolarization.</text>
</comment>
<comment type="catalytic activity">
    <reaction evidence="2">
        <text>Ca(2+)(in) = Ca(2+)(out)</text>
        <dbReference type="Rhea" id="RHEA:29671"/>
        <dbReference type="ChEBI" id="CHEBI:29108"/>
    </reaction>
</comment>
<comment type="subunit">
    <text evidence="2 7">Voltage-dependent calcium channels are multisubunit complexes, consisting of alpha-1, alpha-2, beta and delta subunits in a 1:1:1:1 ratio. The channel activity is directed by the pore-forming and voltage-sensitive alpha-1 subunit. In many cases, this subunit is sufficient to generate voltage-sensitive calcium channel activity. The auxiliary subunits beta and alpha-2/delta linked by a disulfide bridge regulate the channel activity (By similarity). Interacts (via IQ domain) with CABP4; in a calcium independent manner.</text>
</comment>
<comment type="subcellular location">
    <subcellularLocation>
        <location evidence="4">Membrane</location>
        <topology evidence="4">Multi-pass membrane protein</topology>
    </subcellularLocation>
</comment>
<comment type="tissue specificity">
    <text evidence="6">Expressed in the inner and outer nuclear layers and the genglion cell layer of the retina.</text>
</comment>
<comment type="domain">
    <text>Each of the four internal repeats contains five hydrophobic transmembrane segments (S1, S2, S3, S5, S6) and one positively charged transmembrane segment (S4). S4 segments probably represent the voltage-sensor and are characterized by a series of positively charged amino acids at every third position.</text>
</comment>
<comment type="similarity">
    <text evidence="8">Belongs to the calcium channel alpha-1 subunit (TC 1.A.1.11) family. CACNA1F subfamily.</text>
</comment>
<name>CAC1F_MOUSE</name>
<accession>Q9JIS7</accession>
<keyword id="KW-0106">Calcium</keyword>
<keyword id="KW-0107">Calcium channel</keyword>
<keyword id="KW-0109">Calcium transport</keyword>
<keyword id="KW-1015">Disulfide bond</keyword>
<keyword id="KW-0325">Glycoprotein</keyword>
<keyword id="KW-0407">Ion channel</keyword>
<keyword id="KW-0406">Ion transport</keyword>
<keyword id="KW-0472">Membrane</keyword>
<keyword id="KW-0479">Metal-binding</keyword>
<keyword id="KW-1185">Reference proteome</keyword>
<keyword id="KW-0677">Repeat</keyword>
<keyword id="KW-0716">Sensory transduction</keyword>
<keyword id="KW-0812">Transmembrane</keyword>
<keyword id="KW-1133">Transmembrane helix</keyword>
<keyword id="KW-0813">Transport</keyword>
<keyword id="KW-0844">Vision</keyword>
<keyword id="KW-0851">Voltage-gated channel</keyword>
<sequence length="1985" mass="221926">MSESEVGKDTTPEPSPANGTGPGPEWGLCPGPPTVGTDTSGASGLGTPRRRTQHNKHKTVAVASAQRSPRALFCLTLTNPIRRSCISIVEWKPFDILILLTIFANCVALGVYIPFPEDDSNTANHNLEQVEYVFLVIFTVETVLKIVAYGLVLHPSAYIRNGWNLLDFIIVVVGLFSVLLEQGPGRPGDAPHTGGKPGGFDVKALRAFRVLRPLRLVSGVPSLHIVVNSIMKALVPLLHIALLVLFVIIIYAIIGLELFLGRMHKTCYFLGSDMEAEEDPSPCASSGSGRSCTLNHTECRGRWPGPNGGITNFDNFFFAMLTVFQCITMEGWTDVLYWMQDAMGYELPWVYFVSLVIFGSFFVLNLVLGVLSGEFSKEREKAKARGDFQKLREKQQMEEDLRGYLDWITQAEELDLHDPSVDGNLASLAEEGRAGHRPQLSELTNRRRGRLRWFSHSTRSTHSTSSHASLPASDTGSMTDTPGDEDEEEGTMASCTRCLNKIMKTRICRHFRRANRGLRARCRRAVKSNACYWAVLLLVFLNTLTIASEHHGQPLWLTQTQEYANKVLLCLFTVEMLLKLYGLGPSVYVASFFNRFDCFVVCGGILETTLVEVGAMQPLGISVLRCVRLLRIFKVTRHWASLSNLVASLLNSMKSIASLLLLLFLFIIIFSLLGMQLFGGKFNFDQTHTKRSTFDTFPQALLTVFQILTGEDWNVVMYDGIMAYGGPFFPGMLVCVYFIILFICGNYILLNVFLAIAVDNLASGDAGTAKDKGREKSSEGNPPKENKVLVPGGENEDAKGARSEGAAPGMEEEEEEEEEEEEEEEEEEENGAGHVELLQEVVPKEKVVPIPEGSAFFCLSQTNPLRKACHTLIHHHIFTSLILVFIILSSVSLAAEDPIRAHSFRNHILGYFDYAFTSIFTVEILLKMTVFGAFLHRGSFCRSWFNLLDLLVVSVSLISFGIHSSAISVVKILRVLRVLRPLRAINRAKGLKHVVQCVFVAIRTIGNIMIVTTLLQFMFACIGVQLFKGKFYSCTDEAKHTLKESKGSFLIYPDGDVSRPLVRERLWVNSDFNFDNVLSAMMALFTVSTFEGWPALLYKAIDANAEDEGPIYNYHVEISVFFIVYIIIIAFFMMNIFVGFVIITFRAQGEQEYQNCELDKNQRQCVEYALKAQPLRRYIPKNPHQYRVWATVNSRAFEYLMFLLILLNTVALAMQHYEQTAPFNYAMDILNMVFTGLFTIEMVLKIIAFKPKHYFADAWNTFDALIVVGSVVDIAVTEVNNGGHLGESSEDTSRISITFFRLFRVMRLVKLLSKGEGIRTLLWTFIKSFQALPYVALLIAMIFFIYAVIGMQMFGLVALQDGTQINRNNNFQTFPQAVLLLFRCATGEAWQEIMLASLPGNRCDPESDFGPGEEFTCGSSFAIVYFISFFMLCAFLIINLFVAVIMDNFDYLTRDWSILGPHHLDEFKRIWSEYDPGAKGRIKHLDVVALLRRIQPPLGFGKLCPHRVACKRLVAMNVPLNSDGTVTFNATLFALVRTSLKIKTEGNLDQANQELRMVIKKIWKRIKQKLLDEVIPPPDEEEVTVGKFYATFLIQDYFRKFRRRKEKGLLGREAPTSTSSALQAGLRSLQDLGPEIRQALTYVTEEEEEEEEAVGQEAEEEEAENNPEPYKDSIDSQPQSRWNSRISVSLPVKEKLPDSLSTGPSDDDGLAPNSRQPSVIQAGSQPHRRSSGVFMFTIPEEGSIQLKGTQGQDNQNEEQELPDWTPDLDRAGRDSFEPSPFTTSLVQQHVNGHMSTPTFAAPHACRSEPSFTIQCLQRLGSCEDLPIPGTYHRGRTSGPSRAQGSWAAPPQKGRLLYAPLLLVEESTVGEGYLGKLGGPLRTFTCLQVPGAHPNPSHRKRGSADSLVEAVLISEGLGLFAQDPRFVALAKQEIADACHLTLDEMDSAASDLLAQRTISLYSDEESILSRFDEEDLGDEMACVHAL</sequence>
<dbReference type="EMBL" id="AF192497">
    <property type="protein sequence ID" value="AAF86764.1"/>
    <property type="molecule type" value="mRNA"/>
</dbReference>
<dbReference type="SMR" id="Q9JIS7"/>
<dbReference type="CORUM" id="Q9JIS7"/>
<dbReference type="DIP" id="DIP-61285N"/>
<dbReference type="FunCoup" id="Q9JIS7">
    <property type="interactions" value="155"/>
</dbReference>
<dbReference type="IntAct" id="Q9JIS7">
    <property type="interactions" value="2"/>
</dbReference>
<dbReference type="STRING" id="10090.ENSMUSP00000111391"/>
<dbReference type="BindingDB" id="Q9JIS7"/>
<dbReference type="ChEMBL" id="CHEMBL2176791"/>
<dbReference type="DrugCentral" id="Q9JIS7"/>
<dbReference type="GuidetoPHARMACOLOGY" id="531"/>
<dbReference type="GlyCosmos" id="Q9JIS7">
    <property type="glycosylation" value="1 site, No reported glycans"/>
</dbReference>
<dbReference type="GlyGen" id="Q9JIS7">
    <property type="glycosylation" value="3 sites, 1 O-linked glycan (2 sites)"/>
</dbReference>
<dbReference type="iPTMnet" id="Q9JIS7"/>
<dbReference type="PhosphoSitePlus" id="Q9JIS7"/>
<dbReference type="jPOST" id="Q9JIS7"/>
<dbReference type="PaxDb" id="10090-ENSMUSP00000111391"/>
<dbReference type="ProteomicsDB" id="273885"/>
<dbReference type="AGR" id="MGI:1859639"/>
<dbReference type="MGI" id="MGI:1859639">
    <property type="gene designation" value="Cacna1f"/>
</dbReference>
<dbReference type="eggNOG" id="KOG2301">
    <property type="taxonomic scope" value="Eukaryota"/>
</dbReference>
<dbReference type="InParanoid" id="Q9JIS7"/>
<dbReference type="PRO" id="PR:Q9JIS7"/>
<dbReference type="Proteomes" id="UP000000589">
    <property type="component" value="Unplaced"/>
</dbReference>
<dbReference type="RNAct" id="Q9JIS7">
    <property type="molecule type" value="protein"/>
</dbReference>
<dbReference type="GO" id="GO:0016020">
    <property type="term" value="C:membrane"/>
    <property type="evidence" value="ECO:0000266"/>
    <property type="project" value="MGI"/>
</dbReference>
<dbReference type="GO" id="GO:0043025">
    <property type="term" value="C:neuronal cell body"/>
    <property type="evidence" value="ECO:0000266"/>
    <property type="project" value="MGI"/>
</dbReference>
<dbReference type="GO" id="GO:0005886">
    <property type="term" value="C:plasma membrane"/>
    <property type="evidence" value="ECO:0000304"/>
    <property type="project" value="Reactome"/>
</dbReference>
<dbReference type="GO" id="GO:0005891">
    <property type="term" value="C:voltage-gated calcium channel complex"/>
    <property type="evidence" value="ECO:0007669"/>
    <property type="project" value="InterPro"/>
</dbReference>
<dbReference type="GO" id="GO:0046872">
    <property type="term" value="F:metal ion binding"/>
    <property type="evidence" value="ECO:0007669"/>
    <property type="project" value="UniProtKB-KW"/>
</dbReference>
<dbReference type="GO" id="GO:0005245">
    <property type="term" value="F:voltage-gated calcium channel activity"/>
    <property type="evidence" value="ECO:0000315"/>
    <property type="project" value="MGI"/>
</dbReference>
<dbReference type="GO" id="GO:0007409">
    <property type="term" value="P:axonogenesis"/>
    <property type="evidence" value="ECO:0000315"/>
    <property type="project" value="MGI"/>
</dbReference>
<dbReference type="GO" id="GO:0048813">
    <property type="term" value="P:dendrite morphogenesis"/>
    <property type="evidence" value="ECO:0000315"/>
    <property type="project" value="MGI"/>
</dbReference>
<dbReference type="GO" id="GO:0010467">
    <property type="term" value="P:gene expression"/>
    <property type="evidence" value="ECO:0000315"/>
    <property type="project" value="MGI"/>
</dbReference>
<dbReference type="GO" id="GO:0006874">
    <property type="term" value="P:intracellular calcium ion homeostasis"/>
    <property type="evidence" value="ECO:0000315"/>
    <property type="project" value="MGI"/>
</dbReference>
<dbReference type="GO" id="GO:0060041">
    <property type="term" value="P:retina development in camera-type eye"/>
    <property type="evidence" value="ECO:0000315"/>
    <property type="project" value="MGI"/>
</dbReference>
<dbReference type="GO" id="GO:0007601">
    <property type="term" value="P:visual perception"/>
    <property type="evidence" value="ECO:0000315"/>
    <property type="project" value="MGI"/>
</dbReference>
<dbReference type="FunFam" id="1.10.287.70:FF:000009">
    <property type="entry name" value="Voltage-dependent L-type calcium channel subunit alpha"/>
    <property type="match status" value="1"/>
</dbReference>
<dbReference type="FunFam" id="1.10.287.70:FF:000148">
    <property type="entry name" value="Voltage-dependent L-type calcium channel subunit alpha"/>
    <property type="match status" value="1"/>
</dbReference>
<dbReference type="FunFam" id="1.20.120.350:FF:000001">
    <property type="entry name" value="Voltage-dependent L-type calcium channel subunit alpha"/>
    <property type="match status" value="1"/>
</dbReference>
<dbReference type="FunFam" id="1.20.120.350:FF:000006">
    <property type="entry name" value="Voltage-dependent L-type calcium channel subunit alpha"/>
    <property type="match status" value="1"/>
</dbReference>
<dbReference type="FunFam" id="1.20.120.350:FF:000010">
    <property type="entry name" value="Voltage-dependent L-type calcium channel subunit alpha"/>
    <property type="match status" value="1"/>
</dbReference>
<dbReference type="FunFam" id="1.20.120.350:FF:000020">
    <property type="entry name" value="Voltage-dependent L-type calcium channel subunit alpha"/>
    <property type="match status" value="1"/>
</dbReference>
<dbReference type="FunFam" id="1.10.238.10:FF:000063">
    <property type="entry name" value="Voltage-dependent N-type calcium channel subunit alpha"/>
    <property type="match status" value="1"/>
</dbReference>
<dbReference type="Gene3D" id="1.10.287.70">
    <property type="match status" value="4"/>
</dbReference>
<dbReference type="Gene3D" id="6.10.250.2180">
    <property type="match status" value="1"/>
</dbReference>
<dbReference type="Gene3D" id="6.10.250.2500">
    <property type="match status" value="1"/>
</dbReference>
<dbReference type="Gene3D" id="1.20.120.350">
    <property type="entry name" value="Voltage-gated potassium channels. Chain C"/>
    <property type="match status" value="4"/>
</dbReference>
<dbReference type="InterPro" id="IPR031688">
    <property type="entry name" value="CAC1F_C"/>
</dbReference>
<dbReference type="InterPro" id="IPR031649">
    <property type="entry name" value="GPHH_dom"/>
</dbReference>
<dbReference type="InterPro" id="IPR005821">
    <property type="entry name" value="Ion_trans_dom"/>
</dbReference>
<dbReference type="InterPro" id="IPR014873">
    <property type="entry name" value="VDCC_a1su_IQ"/>
</dbReference>
<dbReference type="InterPro" id="IPR050599">
    <property type="entry name" value="VDCC_alpha-1_subunit"/>
</dbReference>
<dbReference type="InterPro" id="IPR005446">
    <property type="entry name" value="VDCC_L_a1su"/>
</dbReference>
<dbReference type="InterPro" id="IPR002077">
    <property type="entry name" value="VDCCAlpha1"/>
</dbReference>
<dbReference type="InterPro" id="IPR027359">
    <property type="entry name" value="Volt_channel_dom_sf"/>
</dbReference>
<dbReference type="PANTHER" id="PTHR45628">
    <property type="entry name" value="VOLTAGE-DEPENDENT CALCIUM CHANNEL TYPE A SUBUNIT ALPHA-1"/>
    <property type="match status" value="1"/>
</dbReference>
<dbReference type="PANTHER" id="PTHR45628:SF2">
    <property type="entry name" value="VOLTAGE-DEPENDENT L-TYPE CALCIUM CHANNEL SUBUNIT ALPHA-1F"/>
    <property type="match status" value="1"/>
</dbReference>
<dbReference type="Pfam" id="PF08763">
    <property type="entry name" value="Ca_chan_IQ"/>
    <property type="match status" value="1"/>
</dbReference>
<dbReference type="Pfam" id="PF16885">
    <property type="entry name" value="CAC1F_C"/>
    <property type="match status" value="1"/>
</dbReference>
<dbReference type="Pfam" id="PF16905">
    <property type="entry name" value="GPHH"/>
    <property type="match status" value="1"/>
</dbReference>
<dbReference type="Pfam" id="PF00520">
    <property type="entry name" value="Ion_trans"/>
    <property type="match status" value="4"/>
</dbReference>
<dbReference type="PRINTS" id="PR00167">
    <property type="entry name" value="CACHANNEL"/>
</dbReference>
<dbReference type="PRINTS" id="PR01630">
    <property type="entry name" value="LVDCCALPHA1"/>
</dbReference>
<dbReference type="SMART" id="SM01062">
    <property type="entry name" value="Ca_chan_IQ"/>
    <property type="match status" value="1"/>
</dbReference>
<dbReference type="SUPFAM" id="SSF81324">
    <property type="entry name" value="Voltage-gated potassium channels"/>
    <property type="match status" value="4"/>
</dbReference>
<evidence type="ECO:0000250" key="1"/>
<evidence type="ECO:0000250" key="2">
    <source>
        <dbReference type="UniProtKB" id="O60840"/>
    </source>
</evidence>
<evidence type="ECO:0000250" key="3">
    <source>
        <dbReference type="UniProtKB" id="P07293"/>
    </source>
</evidence>
<evidence type="ECO:0000255" key="4"/>
<evidence type="ECO:0000256" key="5">
    <source>
        <dbReference type="SAM" id="MobiDB-lite"/>
    </source>
</evidence>
<evidence type="ECO:0000269" key="6">
    <source>
    </source>
</evidence>
<evidence type="ECO:0000269" key="7">
    <source>
    </source>
</evidence>
<evidence type="ECO:0000305" key="8"/>
<evidence type="ECO:0000312" key="9">
    <source>
        <dbReference type="MGI" id="MGI:1859639"/>
    </source>
</evidence>
<reference key="1">
    <citation type="journal article" date="2000" name="Genomics">
        <title>Isolation and characterization of a calcium channel gene, cacna1f, the murine orthologue of the gene for incomplete X-linked congenital stationary night blindness.</title>
        <authorList>
            <person name="Naylor M.J."/>
            <person name="Rancourt D.E."/>
            <person name="Bech-Hansen N.T."/>
        </authorList>
    </citation>
    <scope>NUCLEOTIDE SEQUENCE [MRNA]</scope>
    <scope>TISSUE SPECIFICITY</scope>
    <source>
        <strain>CD-1</strain>
    </source>
</reference>
<reference key="2">
    <citation type="journal article" date="2004" name="Nat. Neurosci.">
        <title>Essential role of Ca2+-binding protein 4, a Cav1.4 channel regulator, in photoreceptor synaptic function.</title>
        <authorList>
            <person name="Haeseleer F."/>
            <person name="Imanishi Y."/>
            <person name="Maeda T."/>
            <person name="Possin D.E."/>
            <person name="Maeda A."/>
            <person name="Lee A."/>
            <person name="Rieke F."/>
            <person name="Palczewski K."/>
        </authorList>
    </citation>
    <scope>INTERACTION WITH CABP4</scope>
</reference>
<feature type="chain" id="PRO_0000053951" description="Voltage-dependent L-type calcium channel subunit alpha-1F">
    <location>
        <begin position="1"/>
        <end position="1985"/>
    </location>
</feature>
<feature type="topological domain" description="Cytoplasmic" evidence="4">
    <location>
        <begin position="1"/>
        <end position="92"/>
    </location>
</feature>
<feature type="transmembrane region" description="Helical; Name=S1 of repeat I" evidence="4">
    <location>
        <begin position="93"/>
        <end position="111"/>
    </location>
</feature>
<feature type="topological domain" description="Extracellular" evidence="4">
    <location>
        <begin position="112"/>
        <end position="129"/>
    </location>
</feature>
<feature type="transmembrane region" description="Helical; Name=S2 of repeat I" evidence="4">
    <location>
        <begin position="130"/>
        <end position="149"/>
    </location>
</feature>
<feature type="topological domain" description="Cytoplasmic" evidence="4">
    <location>
        <begin position="150"/>
        <end position="161"/>
    </location>
</feature>
<feature type="transmembrane region" description="Helical; Name=S3 of repeat I" evidence="4">
    <location>
        <begin position="162"/>
        <end position="180"/>
    </location>
</feature>
<feature type="topological domain" description="Extracellular" evidence="4">
    <location>
        <begin position="181"/>
        <end position="201"/>
    </location>
</feature>
<feature type="transmembrane region" description="Helical; Name=S4 of repeat I" evidence="4">
    <location>
        <begin position="202"/>
        <end position="220"/>
    </location>
</feature>
<feature type="topological domain" description="Cytoplasmic" evidence="4">
    <location>
        <begin position="221"/>
        <end position="239"/>
    </location>
</feature>
<feature type="transmembrane region" description="Helical; Name=S5 of repeat I" evidence="4">
    <location>
        <begin position="240"/>
        <end position="259"/>
    </location>
</feature>
<feature type="topological domain" description="Extracellular" evidence="4">
    <location>
        <begin position="260"/>
        <end position="347"/>
    </location>
</feature>
<feature type="transmembrane region" description="Helical; Name=S6 of repeat I" evidence="4">
    <location>
        <begin position="348"/>
        <end position="372"/>
    </location>
</feature>
<feature type="topological domain" description="Cytoplasmic" evidence="4">
    <location>
        <begin position="373"/>
        <end position="529"/>
    </location>
</feature>
<feature type="transmembrane region" description="Helical; Name=S1 of repeat II" evidence="4">
    <location>
        <begin position="530"/>
        <end position="549"/>
    </location>
</feature>
<feature type="topological domain" description="Extracellular" evidence="4">
    <location>
        <begin position="550"/>
        <end position="564"/>
    </location>
</feature>
<feature type="transmembrane region" description="Helical; Name=S2 of repeat II" evidence="4">
    <location>
        <begin position="565"/>
        <end position="583"/>
    </location>
</feature>
<feature type="topological domain" description="Cytoplasmic" evidence="4">
    <location>
        <begin position="584"/>
        <end position="591"/>
    </location>
</feature>
<feature type="transmembrane region" description="Helical; Name=S3 of repeat II" evidence="4">
    <location>
        <begin position="592"/>
        <end position="610"/>
    </location>
</feature>
<feature type="topological domain" description="Extracellular" evidence="4">
    <location>
        <begin position="611"/>
        <end position="620"/>
    </location>
</feature>
<feature type="transmembrane region" description="Helical; Name=S4 of repeat II" evidence="4">
    <location>
        <begin position="621"/>
        <end position="639"/>
    </location>
</feature>
<feature type="topological domain" description="Cytoplasmic" evidence="4">
    <location>
        <begin position="640"/>
        <end position="658"/>
    </location>
</feature>
<feature type="transmembrane region" description="Helical; Name=S5 of repeat II" evidence="4">
    <location>
        <begin position="659"/>
        <end position="679"/>
    </location>
</feature>
<feature type="topological domain" description="Extracellular" evidence="4">
    <location>
        <begin position="680"/>
        <end position="733"/>
    </location>
</feature>
<feature type="transmembrane region" description="Helical; Name=S6 of repeat II" evidence="4">
    <location>
        <begin position="734"/>
        <end position="758"/>
    </location>
</feature>
<feature type="topological domain" description="Cytoplasmic" evidence="4">
    <location>
        <begin position="759"/>
        <end position="876"/>
    </location>
</feature>
<feature type="transmembrane region" description="Helical; Name=S1 of repeat III" evidence="4">
    <location>
        <begin position="877"/>
        <end position="895"/>
    </location>
</feature>
<feature type="topological domain" description="Extracellular" evidence="4">
    <location>
        <begin position="896"/>
        <end position="911"/>
    </location>
</feature>
<feature type="transmembrane region" description="Helical; Name=S2 of repeat III" evidence="4">
    <location>
        <begin position="912"/>
        <end position="931"/>
    </location>
</feature>
<feature type="topological domain" description="Cytoplasmic" evidence="4">
    <location>
        <begin position="932"/>
        <end position="943"/>
    </location>
</feature>
<feature type="transmembrane region" description="Helical; Name=S3 of repeat III" evidence="4">
    <location>
        <begin position="944"/>
        <end position="962"/>
    </location>
</feature>
<feature type="topological domain" description="Extracellular" evidence="4">
    <location>
        <begin position="963"/>
        <end position="968"/>
    </location>
</feature>
<feature type="transmembrane region" description="Helical; Name=S4 of repeat III" evidence="4">
    <location>
        <begin position="969"/>
        <end position="988"/>
    </location>
</feature>
<feature type="topological domain" description="Cytoplasmic" evidence="4">
    <location>
        <begin position="989"/>
        <end position="1007"/>
    </location>
</feature>
<feature type="transmembrane region" description="Helical; Name=S5 of repeat III" evidence="4">
    <location>
        <begin position="1008"/>
        <end position="1027"/>
    </location>
</feature>
<feature type="topological domain" description="Extracellular" evidence="4">
    <location>
        <begin position="1028"/>
        <end position="1117"/>
    </location>
</feature>
<feature type="transmembrane region" description="Helical; Name=S6 of repeat III" evidence="4">
    <location>
        <begin position="1118"/>
        <end position="1138"/>
    </location>
</feature>
<feature type="topological domain" description="Cytoplasmic" evidence="4">
    <location>
        <begin position="1139"/>
        <end position="1195"/>
    </location>
</feature>
<feature type="transmembrane region" description="Helical; Name=S1 of repeat IV" evidence="4">
    <location>
        <begin position="1196"/>
        <end position="1214"/>
    </location>
</feature>
<feature type="topological domain" description="Extracellular" evidence="4">
    <location>
        <begin position="1215"/>
        <end position="1229"/>
    </location>
</feature>
<feature type="transmembrane region" description="Helical; Name=S2 of repeat IV" evidence="4">
    <location>
        <begin position="1230"/>
        <end position="1249"/>
    </location>
</feature>
<feature type="topological domain" description="Cytoplasmic" evidence="4">
    <location>
        <begin position="1250"/>
        <end position="1256"/>
    </location>
</feature>
<feature type="transmembrane region" description="Helical; Name=S3 of repeat IV" evidence="4">
    <location>
        <begin position="1257"/>
        <end position="1278"/>
    </location>
</feature>
<feature type="topological domain" description="Extracellular" evidence="4">
    <location>
        <begin position="1279"/>
        <end position="1295"/>
    </location>
</feature>
<feature type="transmembrane region" description="Helical; Name=S4 of repeat IV" evidence="4">
    <location>
        <begin position="1296"/>
        <end position="1315"/>
    </location>
</feature>
<feature type="topological domain" description="Cytoplasmic" evidence="4">
    <location>
        <begin position="1316"/>
        <end position="1334"/>
    </location>
</feature>
<feature type="transmembrane region" description="Helical; Name=S5 of repeat IV" evidence="4">
    <location>
        <begin position="1335"/>
        <end position="1354"/>
    </location>
</feature>
<feature type="topological domain" description="Extracellular" evidence="4">
    <location>
        <begin position="1355"/>
        <end position="1421"/>
    </location>
</feature>
<feature type="transmembrane region" description="Helical; Name=S6 of repeat IV" evidence="4">
    <location>
        <begin position="1422"/>
        <end position="1446"/>
    </location>
</feature>
<feature type="topological domain" description="Cytoplasmic" evidence="4">
    <location>
        <begin position="1447"/>
        <end position="1982"/>
    </location>
</feature>
<feature type="repeat" description="I">
    <location>
        <begin position="79"/>
        <end position="375"/>
    </location>
</feature>
<feature type="repeat" description="II">
    <location>
        <begin position="515"/>
        <end position="761"/>
    </location>
</feature>
<feature type="repeat" description="III">
    <location>
        <begin position="858"/>
        <end position="1140"/>
    </location>
</feature>
<feature type="repeat" description="IV">
    <location>
        <begin position="1182"/>
        <end position="1449"/>
    </location>
</feature>
<feature type="region of interest" description="Disordered" evidence="5">
    <location>
        <begin position="1"/>
        <end position="56"/>
    </location>
</feature>
<feature type="region of interest" description="Binding to the beta subunit" evidence="1">
    <location>
        <begin position="395"/>
        <end position="412"/>
    </location>
</feature>
<feature type="region of interest" description="Disordered" evidence="5">
    <location>
        <begin position="455"/>
        <end position="490"/>
    </location>
</feature>
<feature type="region of interest" description="Disordered" evidence="5">
    <location>
        <begin position="766"/>
        <end position="834"/>
    </location>
</feature>
<feature type="region of interest" description="Dihydropyridine binding" evidence="1">
    <location>
        <begin position="1065"/>
        <end position="1155"/>
    </location>
</feature>
<feature type="region of interest" description="Dihydropyridine binding" evidence="1">
    <location>
        <begin position="1402"/>
        <end position="1468"/>
    </location>
</feature>
<feature type="region of interest" description="Phenylalkylamine binding" evidence="1">
    <location>
        <begin position="1414"/>
        <end position="1457"/>
    </location>
</feature>
<feature type="region of interest" description="Disordered" evidence="5">
    <location>
        <begin position="1643"/>
        <end position="1729"/>
    </location>
</feature>
<feature type="region of interest" description="Disordered" evidence="5">
    <location>
        <begin position="1746"/>
        <end position="1778"/>
    </location>
</feature>
<feature type="compositionally biased region" description="Basic and acidic residues" evidence="5">
    <location>
        <begin position="1"/>
        <end position="11"/>
    </location>
</feature>
<feature type="compositionally biased region" description="Low complexity" evidence="5">
    <location>
        <begin position="455"/>
        <end position="469"/>
    </location>
</feature>
<feature type="compositionally biased region" description="Basic and acidic residues" evidence="5">
    <location>
        <begin position="768"/>
        <end position="787"/>
    </location>
</feature>
<feature type="compositionally biased region" description="Acidic residues" evidence="5">
    <location>
        <begin position="810"/>
        <end position="830"/>
    </location>
</feature>
<feature type="compositionally biased region" description="Acidic residues" evidence="5">
    <location>
        <begin position="1644"/>
        <end position="1665"/>
    </location>
</feature>
<feature type="compositionally biased region" description="Polar residues" evidence="5">
    <location>
        <begin position="1675"/>
        <end position="1687"/>
    </location>
</feature>
<feature type="compositionally biased region" description="Polar residues" evidence="5">
    <location>
        <begin position="1713"/>
        <end position="1724"/>
    </location>
</feature>
<feature type="compositionally biased region" description="Basic and acidic residues" evidence="5">
    <location>
        <begin position="1767"/>
        <end position="1776"/>
    </location>
</feature>
<feature type="binding site" evidence="3">
    <location>
        <position position="330"/>
    </location>
    <ligand>
        <name>Ca(2+)</name>
        <dbReference type="ChEBI" id="CHEBI:29108"/>
    </ligand>
</feature>
<feature type="binding site" evidence="3">
    <location>
        <position position="711"/>
    </location>
    <ligand>
        <name>Ca(2+)</name>
        <dbReference type="ChEBI" id="CHEBI:29108"/>
    </ligand>
</feature>
<feature type="binding site" evidence="3">
    <location>
        <position position="1091"/>
    </location>
    <ligand>
        <name>Ca(2+)</name>
        <dbReference type="ChEBI" id="CHEBI:29108"/>
    </ligand>
</feature>
<feature type="glycosylation site" description="N-linked (GlcNAc...) asparagine" evidence="4">
    <location>
        <position position="295"/>
    </location>
</feature>
<organism>
    <name type="scientific">Mus musculus</name>
    <name type="common">Mouse</name>
    <dbReference type="NCBI Taxonomy" id="10090"/>
    <lineage>
        <taxon>Eukaryota</taxon>
        <taxon>Metazoa</taxon>
        <taxon>Chordata</taxon>
        <taxon>Craniata</taxon>
        <taxon>Vertebrata</taxon>
        <taxon>Euteleostomi</taxon>
        <taxon>Mammalia</taxon>
        <taxon>Eutheria</taxon>
        <taxon>Euarchontoglires</taxon>
        <taxon>Glires</taxon>
        <taxon>Rodentia</taxon>
        <taxon>Myomorpha</taxon>
        <taxon>Muroidea</taxon>
        <taxon>Muridae</taxon>
        <taxon>Murinae</taxon>
        <taxon>Mus</taxon>
        <taxon>Mus</taxon>
    </lineage>
</organism>